<gene>
    <name type="primary">SVP26</name>
    <name type="ordered locus">YHR181W</name>
</gene>
<protein>
    <recommendedName>
        <fullName>Protein SVP26</fullName>
    </recommendedName>
    <alternativeName>
        <fullName>Sed5 compartment vesicle protein of 26 kDa</fullName>
    </alternativeName>
</protein>
<accession>P38869</accession>
<accession>D3DLC9</accession>
<feature type="chain" id="PRO_0000202934" description="Protein SVP26">
    <location>
        <begin position="1"/>
        <end position="228"/>
    </location>
</feature>
<feature type="topological domain" description="Cytoplasmic" evidence="1">
    <location>
        <position position="1"/>
    </location>
</feature>
<feature type="transmembrane region" description="Helical" evidence="1">
    <location>
        <begin position="2"/>
        <end position="22"/>
    </location>
</feature>
<feature type="topological domain" description="Lumenal" evidence="1">
    <location>
        <begin position="23"/>
        <end position="42"/>
    </location>
</feature>
<feature type="transmembrane region" description="Helical" evidence="1">
    <location>
        <begin position="43"/>
        <end position="59"/>
    </location>
</feature>
<feature type="topological domain" description="Cytoplasmic" evidence="1">
    <location>
        <begin position="60"/>
        <end position="88"/>
    </location>
</feature>
<feature type="transmembrane region" description="Helical" evidence="1">
    <location>
        <begin position="89"/>
        <end position="105"/>
    </location>
</feature>
<feature type="topological domain" description="Lumenal" evidence="1">
    <location>
        <begin position="106"/>
        <end position="142"/>
    </location>
</feature>
<feature type="transmembrane region" description="Helical" evidence="1">
    <location>
        <begin position="143"/>
        <end position="166"/>
    </location>
</feature>
<feature type="topological domain" description="Cytoplasmic" evidence="1">
    <location>
        <begin position="167"/>
        <end position="228"/>
    </location>
</feature>
<feature type="glycosylation site" description="N-linked (GlcNAc...) asparagine" evidence="1">
    <location>
        <position position="115"/>
    </location>
</feature>
<name>SVP26_YEAST</name>
<organism>
    <name type="scientific">Saccharomyces cerevisiae (strain ATCC 204508 / S288c)</name>
    <name type="common">Baker's yeast</name>
    <dbReference type="NCBI Taxonomy" id="559292"/>
    <lineage>
        <taxon>Eukaryota</taxon>
        <taxon>Fungi</taxon>
        <taxon>Dikarya</taxon>
        <taxon>Ascomycota</taxon>
        <taxon>Saccharomycotina</taxon>
        <taxon>Saccharomycetes</taxon>
        <taxon>Saccharomycetales</taxon>
        <taxon>Saccharomycetaceae</taxon>
        <taxon>Saccharomyces</taxon>
    </lineage>
</organism>
<dbReference type="EMBL" id="U00028">
    <property type="protein sequence ID" value="AAB68454.1"/>
    <property type="molecule type" value="Genomic_DNA"/>
</dbReference>
<dbReference type="EMBL" id="BK006934">
    <property type="protein sequence ID" value="DAA06873.1"/>
    <property type="molecule type" value="Genomic_DNA"/>
</dbReference>
<dbReference type="PIR" id="S46673">
    <property type="entry name" value="S46673"/>
</dbReference>
<dbReference type="RefSeq" id="NP_012051.3">
    <property type="nucleotide sequence ID" value="NM_001179312.3"/>
</dbReference>
<dbReference type="BioGRID" id="36614">
    <property type="interactions" value="145"/>
</dbReference>
<dbReference type="FunCoup" id="P38869">
    <property type="interactions" value="327"/>
</dbReference>
<dbReference type="IntAct" id="P38869">
    <property type="interactions" value="4"/>
</dbReference>
<dbReference type="STRING" id="4932.YHR181W"/>
<dbReference type="GlyCosmos" id="P38869">
    <property type="glycosylation" value="1 site, No reported glycans"/>
</dbReference>
<dbReference type="GlyGen" id="P38869">
    <property type="glycosylation" value="1 site"/>
</dbReference>
<dbReference type="PaxDb" id="4932-YHR181W"/>
<dbReference type="PeptideAtlas" id="P38869"/>
<dbReference type="EnsemblFungi" id="YHR181W_mRNA">
    <property type="protein sequence ID" value="YHR181W"/>
    <property type="gene ID" value="YHR181W"/>
</dbReference>
<dbReference type="GeneID" id="856587"/>
<dbReference type="KEGG" id="sce:YHR181W"/>
<dbReference type="AGR" id="SGD:S000001224"/>
<dbReference type="SGD" id="S000001224">
    <property type="gene designation" value="SVP26"/>
</dbReference>
<dbReference type="VEuPathDB" id="FungiDB:YHR181W"/>
<dbReference type="eggNOG" id="KOG4136">
    <property type="taxonomic scope" value="Eukaryota"/>
</dbReference>
<dbReference type="GeneTree" id="ENSGT00390000010888"/>
<dbReference type="HOGENOM" id="CLU_058268_0_0_1"/>
<dbReference type="InParanoid" id="P38869"/>
<dbReference type="OMA" id="TMGTEPV"/>
<dbReference type="OrthoDB" id="28257at2759"/>
<dbReference type="BioCyc" id="YEAST:G3O-31212-MONOMER"/>
<dbReference type="BioGRID-ORCS" id="856587">
    <property type="hits" value="0 hits in 10 CRISPR screens"/>
</dbReference>
<dbReference type="PRO" id="PR:P38869"/>
<dbReference type="Proteomes" id="UP000002311">
    <property type="component" value="Chromosome VIII"/>
</dbReference>
<dbReference type="RNAct" id="P38869">
    <property type="molecule type" value="protein"/>
</dbReference>
<dbReference type="GO" id="GO:0030134">
    <property type="term" value="C:COPII-coated ER to Golgi transport vesicle"/>
    <property type="evidence" value="ECO:0000314"/>
    <property type="project" value="SGD"/>
</dbReference>
<dbReference type="GO" id="GO:0005783">
    <property type="term" value="C:endoplasmic reticulum"/>
    <property type="evidence" value="ECO:0007005"/>
    <property type="project" value="SGD"/>
</dbReference>
<dbReference type="GO" id="GO:0005789">
    <property type="term" value="C:endoplasmic reticulum membrane"/>
    <property type="evidence" value="ECO:0000314"/>
    <property type="project" value="SGD"/>
</dbReference>
<dbReference type="GO" id="GO:0000139">
    <property type="term" value="C:Golgi membrane"/>
    <property type="evidence" value="ECO:0000314"/>
    <property type="project" value="SGD"/>
</dbReference>
<dbReference type="GO" id="GO:0097020">
    <property type="term" value="F:COPII receptor activity"/>
    <property type="evidence" value="ECO:0000315"/>
    <property type="project" value="SGD"/>
</dbReference>
<dbReference type="GO" id="GO:0090110">
    <property type="term" value="P:COPII-coated vesicle cargo loading"/>
    <property type="evidence" value="ECO:0000315"/>
    <property type="project" value="SGD"/>
</dbReference>
<dbReference type="GO" id="GO:0006888">
    <property type="term" value="P:endoplasmic reticulum to Golgi vesicle-mediated transport"/>
    <property type="evidence" value="ECO:0000314"/>
    <property type="project" value="SGD"/>
</dbReference>
<dbReference type="GO" id="GO:0031505">
    <property type="term" value="P:fungal-type cell wall organization"/>
    <property type="evidence" value="ECO:0000315"/>
    <property type="project" value="SGD"/>
</dbReference>
<dbReference type="GO" id="GO:0045053">
    <property type="term" value="P:protein retention in Golgi apparatus"/>
    <property type="evidence" value="ECO:0000315"/>
    <property type="project" value="SGD"/>
</dbReference>
<dbReference type="GO" id="GO:0015031">
    <property type="term" value="P:protein transport"/>
    <property type="evidence" value="ECO:0007669"/>
    <property type="project" value="UniProtKB-KW"/>
</dbReference>
<dbReference type="InterPro" id="IPR007277">
    <property type="entry name" value="Svp26/Tex261"/>
</dbReference>
<dbReference type="PANTHER" id="PTHR13144:SF0">
    <property type="entry name" value="PROTEIN TEX261"/>
    <property type="match status" value="1"/>
</dbReference>
<dbReference type="PANTHER" id="PTHR13144">
    <property type="entry name" value="TEX261 PROTEIN"/>
    <property type="match status" value="1"/>
</dbReference>
<dbReference type="Pfam" id="PF04148">
    <property type="entry name" value="Erv26"/>
    <property type="match status" value="1"/>
</dbReference>
<sequence>MLLELISYAGTVSGFLFLTLSIASGLYYISELVEEHTEPTRRFLTRAIYGIILILILLLLLDGFPFKLTLFSIACYIVYYQNLKSFPFISLTSPTFLLSCVCVVLNHYFWFKYFNDTEVPPQFKFDPNYIPRRRASFAEVASFFGICVWFIPFALFVSLSAGDYVLPTTSEQHMAKKNDDITTNNQPKFRKRAVGLARVVINSVRKYIYSLARVFGYEIEPDFDRLAV</sequence>
<proteinExistence type="evidence at protein level"/>
<evidence type="ECO:0000255" key="1"/>
<evidence type="ECO:0000269" key="2">
    <source>
    </source>
</evidence>
<evidence type="ECO:0000269" key="3">
    <source>
    </source>
</evidence>
<evidence type="ECO:0000269" key="4">
    <source>
    </source>
</evidence>
<evidence type="ECO:0000269" key="5">
    <source>
    </source>
</evidence>
<evidence type="ECO:0000305" key="6"/>
<keyword id="KW-0325">Glycoprotein</keyword>
<keyword id="KW-0333">Golgi apparatus</keyword>
<keyword id="KW-0472">Membrane</keyword>
<keyword id="KW-0653">Protein transport</keyword>
<keyword id="KW-1185">Reference proteome</keyword>
<keyword id="KW-0812">Transmembrane</keyword>
<keyword id="KW-1133">Transmembrane helix</keyword>
<keyword id="KW-0813">Transport</keyword>
<reference key="1">
    <citation type="journal article" date="1994" name="Science">
        <title>Complete nucleotide sequence of Saccharomyces cerevisiae chromosome VIII.</title>
        <authorList>
            <person name="Johnston M."/>
            <person name="Andrews S."/>
            <person name="Brinkman R."/>
            <person name="Cooper J."/>
            <person name="Ding H."/>
            <person name="Dover J."/>
            <person name="Du Z."/>
            <person name="Favello A."/>
            <person name="Fulton L."/>
            <person name="Gattung S."/>
            <person name="Geisel C."/>
            <person name="Kirsten J."/>
            <person name="Kucaba T."/>
            <person name="Hillier L.W."/>
            <person name="Jier M."/>
            <person name="Johnston L."/>
            <person name="Langston Y."/>
            <person name="Latreille P."/>
            <person name="Louis E.J."/>
            <person name="Macri C."/>
            <person name="Mardis E."/>
            <person name="Menezes S."/>
            <person name="Mouser L."/>
            <person name="Nhan M."/>
            <person name="Rifkin L."/>
            <person name="Riles L."/>
            <person name="St Peter H."/>
            <person name="Trevaskis E."/>
            <person name="Vaughan K."/>
            <person name="Vignati D."/>
            <person name="Wilcox L."/>
            <person name="Wohldman P."/>
            <person name="Waterston R."/>
            <person name="Wilson R."/>
            <person name="Vaudin M."/>
        </authorList>
    </citation>
    <scope>NUCLEOTIDE SEQUENCE [LARGE SCALE GENOMIC DNA]</scope>
    <source>
        <strain>ATCC 204508 / S288c</strain>
    </source>
</reference>
<reference key="2">
    <citation type="journal article" date="2014" name="G3 (Bethesda)">
        <title>The reference genome sequence of Saccharomyces cerevisiae: Then and now.</title>
        <authorList>
            <person name="Engel S.R."/>
            <person name="Dietrich F.S."/>
            <person name="Fisk D.G."/>
            <person name="Binkley G."/>
            <person name="Balakrishnan R."/>
            <person name="Costanzo M.C."/>
            <person name="Dwight S.S."/>
            <person name="Hitz B.C."/>
            <person name="Karra K."/>
            <person name="Nash R.S."/>
            <person name="Weng S."/>
            <person name="Wong E.D."/>
            <person name="Lloyd P."/>
            <person name="Skrzypek M.S."/>
            <person name="Miyasato S.R."/>
            <person name="Simison M."/>
            <person name="Cherry J.M."/>
        </authorList>
    </citation>
    <scope>GENOME REANNOTATION</scope>
    <source>
        <strain>ATCC 204508 / S288c</strain>
    </source>
</reference>
<reference key="3">
    <citation type="journal article" date="2003" name="Nature">
        <title>Global analysis of protein expression in yeast.</title>
        <authorList>
            <person name="Ghaemmaghami S."/>
            <person name="Huh W.-K."/>
            <person name="Bower K."/>
            <person name="Howson R.W."/>
            <person name="Belle A."/>
            <person name="Dephoure N."/>
            <person name="O'Shea E.K."/>
            <person name="Weissman J.S."/>
        </authorList>
    </citation>
    <scope>LEVEL OF PROTEIN EXPRESSION [LARGE SCALE ANALYSIS]</scope>
</reference>
<reference key="4">
    <citation type="journal article" date="2003" name="Nature">
        <title>Global analysis of protein localization in budding yeast.</title>
        <authorList>
            <person name="Huh W.-K."/>
            <person name="Falvo J.V."/>
            <person name="Gerke L.C."/>
            <person name="Carroll A.S."/>
            <person name="Howson R.W."/>
            <person name="Weissman J.S."/>
            <person name="O'Shea E.K."/>
        </authorList>
    </citation>
    <scope>SUBCELLULAR LOCATION [LARGE SCALE ANALYSIS]</scope>
</reference>
<reference key="5">
    <citation type="journal article" date="2005" name="Mol. Cell. Biol.">
        <title>Immunoisolation of the yeast Golgi subcompartments and characterization of a novel membrane protein, Svp26, discovered in the Sed5-containing compartments.</title>
        <authorList>
            <person name="Inadome H."/>
            <person name="Noda Y."/>
            <person name="Adachi H."/>
            <person name="Yoda K."/>
        </authorList>
    </citation>
    <scope>IDENTIFICATION BY MASS SPECTROMETRY</scope>
    <scope>FUNCTION</scope>
    <scope>SUBCELLULAR LOCATION</scope>
    <scope>SUBUNIT</scope>
    <scope>INTERACTION WITH KTR3</scope>
</reference>
<reference key="6">
    <citation type="journal article" date="2006" name="Proc. Natl. Acad. Sci. U.S.A.">
        <title>A global topology map of the Saccharomyces cerevisiae membrane proteome.</title>
        <authorList>
            <person name="Kim H."/>
            <person name="Melen K."/>
            <person name="Oesterberg M."/>
            <person name="von Heijne G."/>
        </authorList>
    </citation>
    <scope>TOPOLOGY [LARGE SCALE ANALYSIS]</scope>
    <source>
        <strain>ATCC 208353 / W303-1A</strain>
    </source>
</reference>
<reference key="7">
    <citation type="journal article" date="2010" name="J. Biol. Chem.">
        <title>Svp26 facilitates endoplasmic reticulum to Golgi transport of a set of mannosyltransferases in Saccharomyces cerevisiae.</title>
        <authorList>
            <person name="Noda Y."/>
            <person name="Yoda K."/>
        </authorList>
    </citation>
    <scope>FUNCTION</scope>
    <scope>SUBCELLULAR LOCATION</scope>
    <scope>INTERACTION WITH MNN2 AND MNN5</scope>
</reference>
<comment type="function">
    <text evidence="4 5">Plays a role in retention of a subset of membrane proteins in the early Golgi compartments. Facilitates endoplasmic reticulum to Golgi transport of mannosyltransferases MNN2 and MNN5.</text>
</comment>
<comment type="subunit">
    <text evidence="4 5">Interacts with itself. Interacts with KTR3, MNN2 and MNN5.</text>
</comment>
<comment type="subcellular location">
    <subcellularLocation>
        <location evidence="2 4 5">Golgi apparatus</location>
        <location evidence="2 4 5">cis-Golgi network membrane</location>
        <topology evidence="2 4 5">Multi-pass membrane protein</topology>
    </subcellularLocation>
    <text>Early Golgi.</text>
</comment>
<comment type="PTM">
    <text>N-glycosylated.</text>
</comment>
<comment type="miscellaneous">
    <text evidence="3">Present with 1810 molecules/cell in log phase SD medium.</text>
</comment>
<comment type="similarity">
    <text evidence="6">Belongs to the SVP26 family.</text>
</comment>